<dbReference type="EMBL" id="BX640423">
    <property type="protein sequence ID" value="CAE39752.1"/>
    <property type="molecule type" value="Genomic_DNA"/>
</dbReference>
<dbReference type="RefSeq" id="WP_003806887.1">
    <property type="nucleotide sequence ID" value="NC_002928.3"/>
</dbReference>
<dbReference type="SMR" id="Q7W2H2"/>
<dbReference type="GeneID" id="93206240"/>
<dbReference type="KEGG" id="bpa:BPP0011"/>
<dbReference type="HOGENOM" id="CLU_062853_0_0_4"/>
<dbReference type="Proteomes" id="UP000001421">
    <property type="component" value="Chromosome"/>
</dbReference>
<dbReference type="GO" id="GO:0022625">
    <property type="term" value="C:cytosolic large ribosomal subunit"/>
    <property type="evidence" value="ECO:0007669"/>
    <property type="project" value="TreeGrafter"/>
</dbReference>
<dbReference type="GO" id="GO:0019843">
    <property type="term" value="F:rRNA binding"/>
    <property type="evidence" value="ECO:0007669"/>
    <property type="project" value="UniProtKB-UniRule"/>
</dbReference>
<dbReference type="GO" id="GO:0003735">
    <property type="term" value="F:structural constituent of ribosome"/>
    <property type="evidence" value="ECO:0007669"/>
    <property type="project" value="InterPro"/>
</dbReference>
<dbReference type="GO" id="GO:0000049">
    <property type="term" value="F:tRNA binding"/>
    <property type="evidence" value="ECO:0007669"/>
    <property type="project" value="UniProtKB-KW"/>
</dbReference>
<dbReference type="GO" id="GO:0006417">
    <property type="term" value="P:regulation of translation"/>
    <property type="evidence" value="ECO:0007669"/>
    <property type="project" value="UniProtKB-KW"/>
</dbReference>
<dbReference type="GO" id="GO:0006412">
    <property type="term" value="P:translation"/>
    <property type="evidence" value="ECO:0007669"/>
    <property type="project" value="UniProtKB-UniRule"/>
</dbReference>
<dbReference type="CDD" id="cd00403">
    <property type="entry name" value="Ribosomal_L1"/>
    <property type="match status" value="1"/>
</dbReference>
<dbReference type="FunFam" id="3.40.50.790:FF:000001">
    <property type="entry name" value="50S ribosomal protein L1"/>
    <property type="match status" value="1"/>
</dbReference>
<dbReference type="Gene3D" id="3.30.190.20">
    <property type="match status" value="1"/>
</dbReference>
<dbReference type="Gene3D" id="3.40.50.790">
    <property type="match status" value="1"/>
</dbReference>
<dbReference type="HAMAP" id="MF_01318_B">
    <property type="entry name" value="Ribosomal_uL1_B"/>
    <property type="match status" value="1"/>
</dbReference>
<dbReference type="InterPro" id="IPR005878">
    <property type="entry name" value="Ribosom_uL1_bac-type"/>
</dbReference>
<dbReference type="InterPro" id="IPR002143">
    <property type="entry name" value="Ribosomal_uL1"/>
</dbReference>
<dbReference type="InterPro" id="IPR023674">
    <property type="entry name" value="Ribosomal_uL1-like"/>
</dbReference>
<dbReference type="InterPro" id="IPR028364">
    <property type="entry name" value="Ribosomal_uL1/biogenesis"/>
</dbReference>
<dbReference type="InterPro" id="IPR016095">
    <property type="entry name" value="Ribosomal_uL1_3-a/b-sand"/>
</dbReference>
<dbReference type="InterPro" id="IPR023673">
    <property type="entry name" value="Ribosomal_uL1_CS"/>
</dbReference>
<dbReference type="NCBIfam" id="TIGR01169">
    <property type="entry name" value="rplA_bact"/>
    <property type="match status" value="1"/>
</dbReference>
<dbReference type="PANTHER" id="PTHR36427">
    <property type="entry name" value="54S RIBOSOMAL PROTEIN L1, MITOCHONDRIAL"/>
    <property type="match status" value="1"/>
</dbReference>
<dbReference type="PANTHER" id="PTHR36427:SF3">
    <property type="entry name" value="LARGE RIBOSOMAL SUBUNIT PROTEIN UL1M"/>
    <property type="match status" value="1"/>
</dbReference>
<dbReference type="Pfam" id="PF00687">
    <property type="entry name" value="Ribosomal_L1"/>
    <property type="match status" value="1"/>
</dbReference>
<dbReference type="PIRSF" id="PIRSF002155">
    <property type="entry name" value="Ribosomal_L1"/>
    <property type="match status" value="1"/>
</dbReference>
<dbReference type="SUPFAM" id="SSF56808">
    <property type="entry name" value="Ribosomal protein L1"/>
    <property type="match status" value="1"/>
</dbReference>
<dbReference type="PROSITE" id="PS01199">
    <property type="entry name" value="RIBOSOMAL_L1"/>
    <property type="match status" value="1"/>
</dbReference>
<evidence type="ECO:0000255" key="1">
    <source>
        <dbReference type="HAMAP-Rule" id="MF_01318"/>
    </source>
</evidence>
<evidence type="ECO:0000305" key="2"/>
<protein>
    <recommendedName>
        <fullName evidence="1">Large ribosomal subunit protein uL1</fullName>
    </recommendedName>
    <alternativeName>
        <fullName evidence="2">50S ribosomal protein L1</fullName>
    </alternativeName>
</protein>
<keyword id="KW-0678">Repressor</keyword>
<keyword id="KW-0687">Ribonucleoprotein</keyword>
<keyword id="KW-0689">Ribosomal protein</keyword>
<keyword id="KW-0694">RNA-binding</keyword>
<keyword id="KW-0699">rRNA-binding</keyword>
<keyword id="KW-0810">Translation regulation</keyword>
<keyword id="KW-0820">tRNA-binding</keyword>
<reference key="1">
    <citation type="journal article" date="2003" name="Nat. Genet.">
        <title>Comparative analysis of the genome sequences of Bordetella pertussis, Bordetella parapertussis and Bordetella bronchiseptica.</title>
        <authorList>
            <person name="Parkhill J."/>
            <person name="Sebaihia M."/>
            <person name="Preston A."/>
            <person name="Murphy L.D."/>
            <person name="Thomson N.R."/>
            <person name="Harris D.E."/>
            <person name="Holden M.T.G."/>
            <person name="Churcher C.M."/>
            <person name="Bentley S.D."/>
            <person name="Mungall K.L."/>
            <person name="Cerdeno-Tarraga A.-M."/>
            <person name="Temple L."/>
            <person name="James K.D."/>
            <person name="Harris B."/>
            <person name="Quail M.A."/>
            <person name="Achtman M."/>
            <person name="Atkin R."/>
            <person name="Baker S."/>
            <person name="Basham D."/>
            <person name="Bason N."/>
            <person name="Cherevach I."/>
            <person name="Chillingworth T."/>
            <person name="Collins M."/>
            <person name="Cronin A."/>
            <person name="Davis P."/>
            <person name="Doggett J."/>
            <person name="Feltwell T."/>
            <person name="Goble A."/>
            <person name="Hamlin N."/>
            <person name="Hauser H."/>
            <person name="Holroyd S."/>
            <person name="Jagels K."/>
            <person name="Leather S."/>
            <person name="Moule S."/>
            <person name="Norberczak H."/>
            <person name="O'Neil S."/>
            <person name="Ormond D."/>
            <person name="Price C."/>
            <person name="Rabbinowitsch E."/>
            <person name="Rutter S."/>
            <person name="Sanders M."/>
            <person name="Saunders D."/>
            <person name="Seeger K."/>
            <person name="Sharp S."/>
            <person name="Simmonds M."/>
            <person name="Skelton J."/>
            <person name="Squares R."/>
            <person name="Squares S."/>
            <person name="Stevens K."/>
            <person name="Unwin L."/>
            <person name="Whitehead S."/>
            <person name="Barrell B.G."/>
            <person name="Maskell D.J."/>
        </authorList>
    </citation>
    <scope>NUCLEOTIDE SEQUENCE [LARGE SCALE GENOMIC DNA]</scope>
    <source>
        <strain>12822 / ATCC BAA-587 / NCTC 13253</strain>
    </source>
</reference>
<comment type="function">
    <text evidence="1">Binds directly to 23S rRNA. The L1 stalk is quite mobile in the ribosome, and is involved in E site tRNA release.</text>
</comment>
<comment type="function">
    <text evidence="1">Protein L1 is also a translational repressor protein, it controls the translation of the L11 operon by binding to its mRNA.</text>
</comment>
<comment type="subunit">
    <text evidence="1">Part of the 50S ribosomal subunit.</text>
</comment>
<comment type="similarity">
    <text evidence="1">Belongs to the universal ribosomal protein uL1 family.</text>
</comment>
<feature type="chain" id="PRO_0000125625" description="Large ribosomal subunit protein uL1">
    <location>
        <begin position="1"/>
        <end position="232"/>
    </location>
</feature>
<organism>
    <name type="scientific">Bordetella parapertussis (strain 12822 / ATCC BAA-587 / NCTC 13253)</name>
    <dbReference type="NCBI Taxonomy" id="257311"/>
    <lineage>
        <taxon>Bacteria</taxon>
        <taxon>Pseudomonadati</taxon>
        <taxon>Pseudomonadota</taxon>
        <taxon>Betaproteobacteria</taxon>
        <taxon>Burkholderiales</taxon>
        <taxon>Alcaligenaceae</taxon>
        <taxon>Bordetella</taxon>
    </lineage>
</organism>
<accession>Q7W2H2</accession>
<proteinExistence type="inferred from homology"/>
<gene>
    <name evidence="1" type="primary">rplA</name>
    <name type="ordered locus">BPP0011</name>
</gene>
<name>RL1_BORPA</name>
<sequence length="232" mass="23980">MAKLSKRAAAIAQKIDRTKLYPVGEALNLVKETATAKFDESIDVAVQLGIDPKKSDQLVRGSVVLPAGTGKTVRVAVFAQGEKADAARAAGADIVGLDDLAEQIKAGQMDFDVVIASPDTMRVVGALGQVLGPRGLMPNPKVGTVTPDVATAVKNAKAGQIQYRTDKAGIIHATIGRASFGVEQLQNNLAALVDALQKARPAAAKGIYLRKLAVSSTMGGGARVEIASLSAN</sequence>